<comment type="function">
    <text evidence="2">GTP hydrolase that promotes the GTP-dependent binding of aminoacyl-tRNA to the A-site of ribosomes during protein biosynthesis.</text>
</comment>
<comment type="catalytic activity">
    <reaction evidence="2">
        <text>GTP + H2O = GDP + phosphate + H(+)</text>
        <dbReference type="Rhea" id="RHEA:19669"/>
        <dbReference type="ChEBI" id="CHEBI:15377"/>
        <dbReference type="ChEBI" id="CHEBI:15378"/>
        <dbReference type="ChEBI" id="CHEBI:37565"/>
        <dbReference type="ChEBI" id="CHEBI:43474"/>
        <dbReference type="ChEBI" id="CHEBI:58189"/>
        <dbReference type="EC" id="3.6.5.3"/>
    </reaction>
    <physiologicalReaction direction="left-to-right" evidence="2">
        <dbReference type="Rhea" id="RHEA:19670"/>
    </physiologicalReaction>
</comment>
<comment type="subunit">
    <text evidence="2">Monomer.</text>
</comment>
<comment type="subcellular location">
    <subcellularLocation>
        <location evidence="2">Cytoplasm</location>
    </subcellularLocation>
</comment>
<comment type="similarity">
    <text evidence="2">Belongs to the TRAFAC class translation factor GTPase superfamily. Classic translation factor GTPase family. EF-Tu/EF-1A subfamily.</text>
</comment>
<sequence length="399" mass="43673">MAKEKFSRNKPHVNIGTIGHVDHGKTTLTAAISAVLSRRGLAELKDYDNIDNAPEEKERGITIATSHIEYETENRHYAHVDCPGHADYVKNMITGAAQMDGAILVVSAADGPMPQTREHILLSRQVGVPYIVVFMNKADMVDDAELLELVEMEIRELLSSYDFPGDDTPIISGSALQALEEAKAGQDGEWSKKILDLMAAVDDYIPTPARDTDKDFLMPIEDVFSISGRGTVVTGRIEKGVVKVGDTIEIVGIRDTQTTTVTGVEMFRKEMDQGEAGDNVGVLLRGTKKEDVERGMVLAKPKSITPHTDFEAEVYILNKDEGGRHTPFFNNYRPQFYVRTTDVTGAIKLAEGVEMVMPGDNVRITVSLIAPVALEEGTRFAIREGGRTVGSGVVSKIIK</sequence>
<proteinExistence type="inferred from homology"/>
<gene>
    <name evidence="2" type="primary">tuf</name>
    <name type="ordered locus">Cla_0440</name>
</gene>
<name>EFTU_CAMLR</name>
<evidence type="ECO:0000250" key="1"/>
<evidence type="ECO:0000255" key="2">
    <source>
        <dbReference type="HAMAP-Rule" id="MF_00118"/>
    </source>
</evidence>
<protein>
    <recommendedName>
        <fullName evidence="2">Elongation factor Tu</fullName>
        <shortName evidence="2">EF-Tu</shortName>
        <ecNumber evidence="2">3.6.5.3</ecNumber>
    </recommendedName>
</protein>
<dbReference type="EC" id="3.6.5.3" evidence="2"/>
<dbReference type="EMBL" id="CP000932">
    <property type="protein sequence ID" value="ACM63794.1"/>
    <property type="molecule type" value="Genomic_DNA"/>
</dbReference>
<dbReference type="RefSeq" id="WP_012661177.1">
    <property type="nucleotide sequence ID" value="NC_012039.1"/>
</dbReference>
<dbReference type="SMR" id="B9KFF9"/>
<dbReference type="STRING" id="306263.Cla_0440"/>
<dbReference type="KEGG" id="cla:CLA_0440"/>
<dbReference type="PATRIC" id="fig|306263.5.peg.438"/>
<dbReference type="eggNOG" id="COG0050">
    <property type="taxonomic scope" value="Bacteria"/>
</dbReference>
<dbReference type="HOGENOM" id="CLU_007265_0_1_7"/>
<dbReference type="Proteomes" id="UP000007727">
    <property type="component" value="Chromosome"/>
</dbReference>
<dbReference type="GO" id="GO:0005829">
    <property type="term" value="C:cytosol"/>
    <property type="evidence" value="ECO:0007669"/>
    <property type="project" value="TreeGrafter"/>
</dbReference>
<dbReference type="GO" id="GO:0005525">
    <property type="term" value="F:GTP binding"/>
    <property type="evidence" value="ECO:0007669"/>
    <property type="project" value="UniProtKB-UniRule"/>
</dbReference>
<dbReference type="GO" id="GO:0003924">
    <property type="term" value="F:GTPase activity"/>
    <property type="evidence" value="ECO:0007669"/>
    <property type="project" value="InterPro"/>
</dbReference>
<dbReference type="GO" id="GO:0003746">
    <property type="term" value="F:translation elongation factor activity"/>
    <property type="evidence" value="ECO:0007669"/>
    <property type="project" value="UniProtKB-UniRule"/>
</dbReference>
<dbReference type="CDD" id="cd01884">
    <property type="entry name" value="EF_Tu"/>
    <property type="match status" value="1"/>
</dbReference>
<dbReference type="CDD" id="cd03697">
    <property type="entry name" value="EFTU_II"/>
    <property type="match status" value="1"/>
</dbReference>
<dbReference type="CDD" id="cd03707">
    <property type="entry name" value="EFTU_III"/>
    <property type="match status" value="1"/>
</dbReference>
<dbReference type="FunFam" id="2.40.30.10:FF:000001">
    <property type="entry name" value="Elongation factor Tu"/>
    <property type="match status" value="1"/>
</dbReference>
<dbReference type="FunFam" id="3.40.50.300:FF:000003">
    <property type="entry name" value="Elongation factor Tu"/>
    <property type="match status" value="1"/>
</dbReference>
<dbReference type="Gene3D" id="3.40.50.300">
    <property type="entry name" value="P-loop containing nucleotide triphosphate hydrolases"/>
    <property type="match status" value="1"/>
</dbReference>
<dbReference type="Gene3D" id="2.40.30.10">
    <property type="entry name" value="Translation factors"/>
    <property type="match status" value="2"/>
</dbReference>
<dbReference type="HAMAP" id="MF_00118_B">
    <property type="entry name" value="EF_Tu_B"/>
    <property type="match status" value="1"/>
</dbReference>
<dbReference type="InterPro" id="IPR041709">
    <property type="entry name" value="EF-Tu_GTP-bd"/>
</dbReference>
<dbReference type="InterPro" id="IPR050055">
    <property type="entry name" value="EF-Tu_GTPase"/>
</dbReference>
<dbReference type="InterPro" id="IPR004161">
    <property type="entry name" value="EFTu-like_2"/>
</dbReference>
<dbReference type="InterPro" id="IPR033720">
    <property type="entry name" value="EFTU_2"/>
</dbReference>
<dbReference type="InterPro" id="IPR031157">
    <property type="entry name" value="G_TR_CS"/>
</dbReference>
<dbReference type="InterPro" id="IPR027417">
    <property type="entry name" value="P-loop_NTPase"/>
</dbReference>
<dbReference type="InterPro" id="IPR005225">
    <property type="entry name" value="Small_GTP-bd"/>
</dbReference>
<dbReference type="InterPro" id="IPR000795">
    <property type="entry name" value="T_Tr_GTP-bd_dom"/>
</dbReference>
<dbReference type="InterPro" id="IPR009000">
    <property type="entry name" value="Transl_B-barrel_sf"/>
</dbReference>
<dbReference type="InterPro" id="IPR009001">
    <property type="entry name" value="Transl_elong_EF1A/Init_IF2_C"/>
</dbReference>
<dbReference type="InterPro" id="IPR004541">
    <property type="entry name" value="Transl_elong_EFTu/EF1A_bac/org"/>
</dbReference>
<dbReference type="InterPro" id="IPR004160">
    <property type="entry name" value="Transl_elong_EFTu/EF1A_C"/>
</dbReference>
<dbReference type="NCBIfam" id="TIGR00485">
    <property type="entry name" value="EF-Tu"/>
    <property type="match status" value="1"/>
</dbReference>
<dbReference type="NCBIfam" id="NF000766">
    <property type="entry name" value="PRK00049.1"/>
    <property type="match status" value="1"/>
</dbReference>
<dbReference type="NCBIfam" id="NF009372">
    <property type="entry name" value="PRK12735.1"/>
    <property type="match status" value="1"/>
</dbReference>
<dbReference type="NCBIfam" id="NF009373">
    <property type="entry name" value="PRK12736.1"/>
    <property type="match status" value="1"/>
</dbReference>
<dbReference type="NCBIfam" id="TIGR00231">
    <property type="entry name" value="small_GTP"/>
    <property type="match status" value="1"/>
</dbReference>
<dbReference type="PANTHER" id="PTHR43721:SF22">
    <property type="entry name" value="ELONGATION FACTOR TU, MITOCHONDRIAL"/>
    <property type="match status" value="1"/>
</dbReference>
<dbReference type="PANTHER" id="PTHR43721">
    <property type="entry name" value="ELONGATION FACTOR TU-RELATED"/>
    <property type="match status" value="1"/>
</dbReference>
<dbReference type="Pfam" id="PF00009">
    <property type="entry name" value="GTP_EFTU"/>
    <property type="match status" value="1"/>
</dbReference>
<dbReference type="Pfam" id="PF03144">
    <property type="entry name" value="GTP_EFTU_D2"/>
    <property type="match status" value="1"/>
</dbReference>
<dbReference type="Pfam" id="PF03143">
    <property type="entry name" value="GTP_EFTU_D3"/>
    <property type="match status" value="1"/>
</dbReference>
<dbReference type="PRINTS" id="PR00315">
    <property type="entry name" value="ELONGATNFCT"/>
</dbReference>
<dbReference type="SUPFAM" id="SSF50465">
    <property type="entry name" value="EF-Tu/eEF-1alpha/eIF2-gamma C-terminal domain"/>
    <property type="match status" value="1"/>
</dbReference>
<dbReference type="SUPFAM" id="SSF52540">
    <property type="entry name" value="P-loop containing nucleoside triphosphate hydrolases"/>
    <property type="match status" value="1"/>
</dbReference>
<dbReference type="SUPFAM" id="SSF50447">
    <property type="entry name" value="Translation proteins"/>
    <property type="match status" value="1"/>
</dbReference>
<dbReference type="PROSITE" id="PS00301">
    <property type="entry name" value="G_TR_1"/>
    <property type="match status" value="1"/>
</dbReference>
<dbReference type="PROSITE" id="PS51722">
    <property type="entry name" value="G_TR_2"/>
    <property type="match status" value="1"/>
</dbReference>
<reference key="1">
    <citation type="journal article" date="2008" name="Foodborne Pathog. Dis.">
        <title>The complete genome sequence and analysis of the human pathogen Campylobacter lari.</title>
        <authorList>
            <person name="Miller W.G."/>
            <person name="Wang G."/>
            <person name="Binnewies T.T."/>
            <person name="Parker C.T."/>
        </authorList>
    </citation>
    <scope>NUCLEOTIDE SEQUENCE [LARGE SCALE GENOMIC DNA]</scope>
    <source>
        <strain>RM2100 / D67 / ATCC BAA-1060</strain>
    </source>
</reference>
<feature type="chain" id="PRO_1000201395" description="Elongation factor Tu">
    <location>
        <begin position="1"/>
        <end position="399"/>
    </location>
</feature>
<feature type="domain" description="tr-type G">
    <location>
        <begin position="10"/>
        <end position="209"/>
    </location>
</feature>
<feature type="region of interest" description="G1" evidence="1">
    <location>
        <begin position="19"/>
        <end position="26"/>
    </location>
</feature>
<feature type="region of interest" description="G2" evidence="1">
    <location>
        <begin position="60"/>
        <end position="64"/>
    </location>
</feature>
<feature type="region of interest" description="G3" evidence="1">
    <location>
        <begin position="81"/>
        <end position="84"/>
    </location>
</feature>
<feature type="region of interest" description="G4" evidence="1">
    <location>
        <begin position="136"/>
        <end position="139"/>
    </location>
</feature>
<feature type="region of interest" description="G5" evidence="1">
    <location>
        <begin position="174"/>
        <end position="176"/>
    </location>
</feature>
<feature type="binding site" evidence="2">
    <location>
        <begin position="19"/>
        <end position="26"/>
    </location>
    <ligand>
        <name>GTP</name>
        <dbReference type="ChEBI" id="CHEBI:37565"/>
    </ligand>
</feature>
<feature type="binding site" evidence="2">
    <location>
        <position position="26"/>
    </location>
    <ligand>
        <name>Mg(2+)</name>
        <dbReference type="ChEBI" id="CHEBI:18420"/>
    </ligand>
</feature>
<feature type="binding site" evidence="2">
    <location>
        <begin position="81"/>
        <end position="85"/>
    </location>
    <ligand>
        <name>GTP</name>
        <dbReference type="ChEBI" id="CHEBI:37565"/>
    </ligand>
</feature>
<feature type="binding site" evidence="2">
    <location>
        <begin position="136"/>
        <end position="139"/>
    </location>
    <ligand>
        <name>GTP</name>
        <dbReference type="ChEBI" id="CHEBI:37565"/>
    </ligand>
</feature>
<keyword id="KW-0963">Cytoplasm</keyword>
<keyword id="KW-0251">Elongation factor</keyword>
<keyword id="KW-0342">GTP-binding</keyword>
<keyword id="KW-0378">Hydrolase</keyword>
<keyword id="KW-0460">Magnesium</keyword>
<keyword id="KW-0479">Metal-binding</keyword>
<keyword id="KW-0547">Nucleotide-binding</keyword>
<keyword id="KW-0648">Protein biosynthesis</keyword>
<keyword id="KW-1185">Reference proteome</keyword>
<organism>
    <name type="scientific">Campylobacter lari (strain RM2100 / D67 / ATCC BAA-1060)</name>
    <dbReference type="NCBI Taxonomy" id="306263"/>
    <lineage>
        <taxon>Bacteria</taxon>
        <taxon>Pseudomonadati</taxon>
        <taxon>Campylobacterota</taxon>
        <taxon>Epsilonproteobacteria</taxon>
        <taxon>Campylobacterales</taxon>
        <taxon>Campylobacteraceae</taxon>
        <taxon>Campylobacter</taxon>
    </lineage>
</organism>
<accession>B9KFF9</accession>